<accession>Q3Z555</accession>
<feature type="chain" id="PRO_0000337985" description="Acetaldehyde dehydrogenase">
    <location>
        <begin position="1"/>
        <end position="316"/>
    </location>
</feature>
<feature type="active site" description="Acyl-thioester intermediate" evidence="1">
    <location>
        <position position="131"/>
    </location>
</feature>
<feature type="binding site" evidence="1">
    <location>
        <begin position="11"/>
        <end position="14"/>
    </location>
    <ligand>
        <name>NAD(+)</name>
        <dbReference type="ChEBI" id="CHEBI:57540"/>
    </ligand>
</feature>
<feature type="binding site" evidence="1">
    <location>
        <begin position="162"/>
        <end position="170"/>
    </location>
    <ligand>
        <name>NAD(+)</name>
        <dbReference type="ChEBI" id="CHEBI:57540"/>
    </ligand>
</feature>
<feature type="binding site" evidence="1">
    <location>
        <position position="289"/>
    </location>
    <ligand>
        <name>NAD(+)</name>
        <dbReference type="ChEBI" id="CHEBI:57540"/>
    </ligand>
</feature>
<name>ACDH_SHISS</name>
<comment type="function">
    <text evidence="1">Catalyzes the conversion of acetaldehyde to acetyl-CoA, using NAD(+) and coenzyme A. Is the final enzyme in the meta-cleavage pathway for the degradation of aromatic compounds.</text>
</comment>
<comment type="catalytic activity">
    <reaction evidence="1">
        <text>acetaldehyde + NAD(+) + CoA = acetyl-CoA + NADH + H(+)</text>
        <dbReference type="Rhea" id="RHEA:23288"/>
        <dbReference type="ChEBI" id="CHEBI:15343"/>
        <dbReference type="ChEBI" id="CHEBI:15378"/>
        <dbReference type="ChEBI" id="CHEBI:57287"/>
        <dbReference type="ChEBI" id="CHEBI:57288"/>
        <dbReference type="ChEBI" id="CHEBI:57540"/>
        <dbReference type="ChEBI" id="CHEBI:57945"/>
        <dbReference type="EC" id="1.2.1.10"/>
    </reaction>
</comment>
<comment type="pathway">
    <text evidence="1">Aromatic compound metabolism; 3-phenylpropanoate degradation.</text>
</comment>
<comment type="subunit">
    <text evidence="1">Interacts with MhpE.</text>
</comment>
<comment type="similarity">
    <text evidence="1">Belongs to the acetaldehyde dehydrogenase family.</text>
</comment>
<evidence type="ECO:0000255" key="1">
    <source>
        <dbReference type="HAMAP-Rule" id="MF_01657"/>
    </source>
</evidence>
<sequence>MSKRKVAIIGSGNIGTDLMIKILRHGQHLEMAVMVGIDPQSDGLARARRMGVATTHEGVIGLMNMPEFADIDIVFDATSAGAHVKNDAALREAKPDIRLIDLTPAAIGPYCVPVVNLEANVDQLNVNMVTCGGQATIPMVAAVSRVARVHYAEIIASIASKSAGPGTRANIDEFTETTSRAIEVVGGAAKGKAIIVLNPAEPPLMMRDTVYVLSDEASQDDIEASINEMAEAVQAYVPGYRLKQRVQFEVIPQDKPVNLPGVGQFSGLKTAVWLEVEGAAHYLPAYAGNLDIMTSSALATAEKMAQSLARKAGEAA</sequence>
<keyword id="KW-0058">Aromatic hydrocarbons catabolism</keyword>
<keyword id="KW-0520">NAD</keyword>
<keyword id="KW-0560">Oxidoreductase</keyword>
<keyword id="KW-1185">Reference proteome</keyword>
<proteinExistence type="inferred from homology"/>
<gene>
    <name evidence="1" type="primary">mhpF</name>
    <name type="ordered locus">SSON_0330</name>
</gene>
<protein>
    <recommendedName>
        <fullName evidence="1">Acetaldehyde dehydrogenase</fullName>
        <ecNumber evidence="1">1.2.1.10</ecNumber>
    </recommendedName>
    <alternativeName>
        <fullName evidence="1">Acetaldehyde dehydrogenase [acetylating]</fullName>
    </alternativeName>
</protein>
<dbReference type="EC" id="1.2.1.10" evidence="1"/>
<dbReference type="EMBL" id="CP000038">
    <property type="protein sequence ID" value="AAZ87107.1"/>
    <property type="molecule type" value="Genomic_DNA"/>
</dbReference>
<dbReference type="RefSeq" id="WP_000044314.1">
    <property type="nucleotide sequence ID" value="NC_007384.1"/>
</dbReference>
<dbReference type="SMR" id="Q3Z555"/>
<dbReference type="GeneID" id="93777104"/>
<dbReference type="KEGG" id="ssn:SSON_0330"/>
<dbReference type="HOGENOM" id="CLU_062208_0_0_6"/>
<dbReference type="UniPathway" id="UPA00714"/>
<dbReference type="Proteomes" id="UP000002529">
    <property type="component" value="Chromosome"/>
</dbReference>
<dbReference type="GO" id="GO:0008774">
    <property type="term" value="F:acetaldehyde dehydrogenase (acetylating) activity"/>
    <property type="evidence" value="ECO:0007669"/>
    <property type="project" value="UniProtKB-UniRule"/>
</dbReference>
<dbReference type="GO" id="GO:0051287">
    <property type="term" value="F:NAD binding"/>
    <property type="evidence" value="ECO:0007669"/>
    <property type="project" value="UniProtKB-UniRule"/>
</dbReference>
<dbReference type="GO" id="GO:0019380">
    <property type="term" value="P:3-phenylpropionate catabolic process"/>
    <property type="evidence" value="ECO:0007669"/>
    <property type="project" value="UniProtKB-UniRule"/>
</dbReference>
<dbReference type="CDD" id="cd23933">
    <property type="entry name" value="ALDH_C"/>
    <property type="match status" value="1"/>
</dbReference>
<dbReference type="FunFam" id="3.30.360.10:FF:000021">
    <property type="entry name" value="Acetaldehyde dehydrogenase"/>
    <property type="match status" value="1"/>
</dbReference>
<dbReference type="Gene3D" id="3.30.360.10">
    <property type="entry name" value="Dihydrodipicolinate Reductase, domain 2"/>
    <property type="match status" value="1"/>
</dbReference>
<dbReference type="Gene3D" id="3.40.50.720">
    <property type="entry name" value="NAD(P)-binding Rossmann-like Domain"/>
    <property type="match status" value="1"/>
</dbReference>
<dbReference type="HAMAP" id="MF_01657">
    <property type="entry name" value="Ac_ald_DH_ac"/>
    <property type="match status" value="1"/>
</dbReference>
<dbReference type="InterPro" id="IPR003361">
    <property type="entry name" value="Acetaldehyde_dehydrogenase"/>
</dbReference>
<dbReference type="InterPro" id="IPR015426">
    <property type="entry name" value="Acetylaldehyde_DH_C"/>
</dbReference>
<dbReference type="InterPro" id="IPR036291">
    <property type="entry name" value="NAD(P)-bd_dom_sf"/>
</dbReference>
<dbReference type="InterPro" id="IPR000534">
    <property type="entry name" value="Semialdehyde_DH_NAD-bd"/>
</dbReference>
<dbReference type="NCBIfam" id="TIGR03215">
    <property type="entry name" value="ac_ald_DH_ac"/>
    <property type="match status" value="1"/>
</dbReference>
<dbReference type="NCBIfam" id="NF006157">
    <property type="entry name" value="PRK08300.1"/>
    <property type="match status" value="1"/>
</dbReference>
<dbReference type="Pfam" id="PF09290">
    <property type="entry name" value="AcetDehyd-dimer"/>
    <property type="match status" value="1"/>
</dbReference>
<dbReference type="Pfam" id="PF01118">
    <property type="entry name" value="Semialdhyde_dh"/>
    <property type="match status" value="1"/>
</dbReference>
<dbReference type="PIRSF" id="PIRSF015689">
    <property type="entry name" value="Actaldh_dh_actl"/>
    <property type="match status" value="1"/>
</dbReference>
<dbReference type="SMART" id="SM00859">
    <property type="entry name" value="Semialdhyde_dh"/>
    <property type="match status" value="1"/>
</dbReference>
<dbReference type="SUPFAM" id="SSF55347">
    <property type="entry name" value="Glyceraldehyde-3-phosphate dehydrogenase-like, C-terminal domain"/>
    <property type="match status" value="1"/>
</dbReference>
<dbReference type="SUPFAM" id="SSF51735">
    <property type="entry name" value="NAD(P)-binding Rossmann-fold domains"/>
    <property type="match status" value="1"/>
</dbReference>
<organism>
    <name type="scientific">Shigella sonnei (strain Ss046)</name>
    <dbReference type="NCBI Taxonomy" id="300269"/>
    <lineage>
        <taxon>Bacteria</taxon>
        <taxon>Pseudomonadati</taxon>
        <taxon>Pseudomonadota</taxon>
        <taxon>Gammaproteobacteria</taxon>
        <taxon>Enterobacterales</taxon>
        <taxon>Enterobacteriaceae</taxon>
        <taxon>Shigella</taxon>
    </lineage>
</organism>
<reference key="1">
    <citation type="journal article" date="2005" name="Nucleic Acids Res.">
        <title>Genome dynamics and diversity of Shigella species, the etiologic agents of bacillary dysentery.</title>
        <authorList>
            <person name="Yang F."/>
            <person name="Yang J."/>
            <person name="Zhang X."/>
            <person name="Chen L."/>
            <person name="Jiang Y."/>
            <person name="Yan Y."/>
            <person name="Tang X."/>
            <person name="Wang J."/>
            <person name="Xiong Z."/>
            <person name="Dong J."/>
            <person name="Xue Y."/>
            <person name="Zhu Y."/>
            <person name="Xu X."/>
            <person name="Sun L."/>
            <person name="Chen S."/>
            <person name="Nie H."/>
            <person name="Peng J."/>
            <person name="Xu J."/>
            <person name="Wang Y."/>
            <person name="Yuan Z."/>
            <person name="Wen Y."/>
            <person name="Yao Z."/>
            <person name="Shen Y."/>
            <person name="Qiang B."/>
            <person name="Hou Y."/>
            <person name="Yu J."/>
            <person name="Jin Q."/>
        </authorList>
    </citation>
    <scope>NUCLEOTIDE SEQUENCE [LARGE SCALE GENOMIC DNA]</scope>
    <source>
        <strain>Ss046</strain>
    </source>
</reference>